<dbReference type="EMBL" id="AL123456">
    <property type="protein sequence ID" value="CCP43737.1"/>
    <property type="molecule type" value="Genomic_DNA"/>
</dbReference>
<dbReference type="RefSeq" id="NP_215502.1">
    <property type="nucleotide sequence ID" value="NC_000962.3"/>
</dbReference>
<dbReference type="RefSeq" id="WP_003915882.1">
    <property type="nucleotide sequence ID" value="NZ_NVQJ01000018.1"/>
</dbReference>
<dbReference type="SMR" id="O53900"/>
<dbReference type="STRING" id="83332.Rv0987"/>
<dbReference type="PaxDb" id="83332-Rv0987"/>
<dbReference type="DNASU" id="885363"/>
<dbReference type="GeneID" id="885363"/>
<dbReference type="KEGG" id="mtu:Rv0987"/>
<dbReference type="KEGG" id="mtv:RVBD_0987"/>
<dbReference type="PATRIC" id="fig|83332.111.peg.1095"/>
<dbReference type="TubercuList" id="Rv0987"/>
<dbReference type="eggNOG" id="COG0577">
    <property type="taxonomic scope" value="Bacteria"/>
</dbReference>
<dbReference type="InParanoid" id="O53900"/>
<dbReference type="OrthoDB" id="9780560at2"/>
<dbReference type="PhylomeDB" id="O53900"/>
<dbReference type="Proteomes" id="UP000001584">
    <property type="component" value="Chromosome"/>
</dbReference>
<dbReference type="GO" id="GO:0005886">
    <property type="term" value="C:plasma membrane"/>
    <property type="evidence" value="ECO:0007005"/>
    <property type="project" value="MTBBASE"/>
</dbReference>
<dbReference type="GO" id="GO:0022857">
    <property type="term" value="F:transmembrane transporter activity"/>
    <property type="evidence" value="ECO:0000318"/>
    <property type="project" value="GO_Central"/>
</dbReference>
<dbReference type="InterPro" id="IPR003838">
    <property type="entry name" value="ABC3_permease_C"/>
</dbReference>
<dbReference type="InterPro" id="IPR025857">
    <property type="entry name" value="MacB_PCD"/>
</dbReference>
<dbReference type="InterPro" id="IPR038766">
    <property type="entry name" value="Membrane_comp_ABC_pdt"/>
</dbReference>
<dbReference type="PANTHER" id="PTHR30287:SF2">
    <property type="entry name" value="BLL1001 PROTEIN"/>
    <property type="match status" value="1"/>
</dbReference>
<dbReference type="PANTHER" id="PTHR30287">
    <property type="entry name" value="MEMBRANE COMPONENT OF PREDICTED ABC SUPERFAMILY METABOLITE UPTAKE TRANSPORTER"/>
    <property type="match status" value="1"/>
</dbReference>
<dbReference type="Pfam" id="PF02687">
    <property type="entry name" value="FtsX"/>
    <property type="match status" value="2"/>
</dbReference>
<dbReference type="Pfam" id="PF12704">
    <property type="entry name" value="MacB_PCD"/>
    <property type="match status" value="1"/>
</dbReference>
<evidence type="ECO:0000255" key="1"/>
<evidence type="ECO:0000269" key="2">
    <source>
    </source>
</evidence>
<evidence type="ECO:0000269" key="3">
    <source>
    </source>
</evidence>
<evidence type="ECO:0000305" key="4"/>
<evidence type="ECO:0000312" key="5">
    <source>
        <dbReference type="EMBL" id="CCP43737.1"/>
    </source>
</evidence>
<accession>O53900</accession>
<accession>F2GHT9</accession>
<accession>I6WZZ1</accession>
<accession>L0T8A8</accession>
<reference key="1">
    <citation type="journal article" date="1998" name="Nature">
        <title>Deciphering the biology of Mycobacterium tuberculosis from the complete genome sequence.</title>
        <authorList>
            <person name="Cole S.T."/>
            <person name="Brosch R."/>
            <person name="Parkhill J."/>
            <person name="Garnier T."/>
            <person name="Churcher C.M."/>
            <person name="Harris D.E."/>
            <person name="Gordon S.V."/>
            <person name="Eiglmeier K."/>
            <person name="Gas S."/>
            <person name="Barry C.E. III"/>
            <person name="Tekaia F."/>
            <person name="Badcock K."/>
            <person name="Basham D."/>
            <person name="Brown D."/>
            <person name="Chillingworth T."/>
            <person name="Connor R."/>
            <person name="Davies R.M."/>
            <person name="Devlin K."/>
            <person name="Feltwell T."/>
            <person name="Gentles S."/>
            <person name="Hamlin N."/>
            <person name="Holroyd S."/>
            <person name="Hornsby T."/>
            <person name="Jagels K."/>
            <person name="Krogh A."/>
            <person name="McLean J."/>
            <person name="Moule S."/>
            <person name="Murphy L.D."/>
            <person name="Oliver S."/>
            <person name="Osborne J."/>
            <person name="Quail M.A."/>
            <person name="Rajandream M.A."/>
            <person name="Rogers J."/>
            <person name="Rutter S."/>
            <person name="Seeger K."/>
            <person name="Skelton S."/>
            <person name="Squares S."/>
            <person name="Squares R."/>
            <person name="Sulston J.E."/>
            <person name="Taylor K."/>
            <person name="Whitehead S."/>
            <person name="Barrell B.G."/>
        </authorList>
    </citation>
    <scope>NUCLEOTIDE SEQUENCE [LARGE SCALE GENOMIC DNA]</scope>
    <source>
        <strain>ATCC 25618 / H37Rv</strain>
    </source>
</reference>
<reference key="2">
    <citation type="journal article" date="2006" name="J. Infect. Dis.">
        <title>Mycobacterium tuberculosis invasion and traversal across an in vitro human blood-brain barrier as a pathogenic mechanism for central nervous system tuberculosis.</title>
        <authorList>
            <person name="Jain S.K."/>
            <person name="Paul-Satyaseela M."/>
            <person name="Lamichhane G."/>
            <person name="Kim K.S."/>
            <person name="Bishai W.R."/>
        </authorList>
    </citation>
    <scope>FUNCTION</scope>
    <scope>INDUCTION</scope>
    <scope>DISRUPTION PHENOTYPE</scope>
    <source>
        <strain>ATCC 25618 / H37Rv</strain>
    </source>
</reference>
<reference key="3">
    <citation type="journal article" date="2007" name="Infect. Immun.">
        <title>Signature-tagged transposon mutagenesis identifies novel Mycobacterium tuberculosis genes involved in the parasitism of human macrophages.</title>
        <authorList>
            <person name="Rosas-Magallanes V."/>
            <person name="Stadthagen-Gomez G."/>
            <person name="Rauzier J."/>
            <person name="Barreiro L.B."/>
            <person name="Tailleux L."/>
            <person name="Boudou F."/>
            <person name="Griffin R."/>
            <person name="Nigou J."/>
            <person name="Jackson M."/>
            <person name="Gicquel B."/>
            <person name="Neyrolles O."/>
        </authorList>
    </citation>
    <scope>FUNCTION</scope>
    <scope>DISRUPTION PHENOTYPE</scope>
    <source>
        <strain>MT103</strain>
    </source>
</reference>
<reference key="4">
    <citation type="journal article" date="2011" name="Mol. Cell. Proteomics">
        <title>Proteogenomic analysis of Mycobacterium tuberculosis by high resolution mass spectrometry.</title>
        <authorList>
            <person name="Kelkar D.S."/>
            <person name="Kumar D."/>
            <person name="Kumar P."/>
            <person name="Balakrishnan L."/>
            <person name="Muthusamy B."/>
            <person name="Yadav A.K."/>
            <person name="Shrivastava P."/>
            <person name="Marimuthu A."/>
            <person name="Anand S."/>
            <person name="Sundaram H."/>
            <person name="Kingsbury R."/>
            <person name="Harsha H.C."/>
            <person name="Nair B."/>
            <person name="Prasad T.S."/>
            <person name="Chauhan D.S."/>
            <person name="Katoch K."/>
            <person name="Katoch V.M."/>
            <person name="Kumar P."/>
            <person name="Chaerkady R."/>
            <person name="Ramachandran S."/>
            <person name="Dash D."/>
            <person name="Pandey A."/>
        </authorList>
    </citation>
    <scope>IDENTIFICATION BY MASS SPECTROMETRY [LARGE SCALE ANALYSIS]</scope>
    <source>
        <strain>ATCC 25618 / H37Rv</strain>
    </source>
</reference>
<name>Y987_MYCTU</name>
<feature type="chain" id="PRO_0000451251" description="Uncharacterized ABC transporter permease protein Rv0987">
    <location>
        <begin position="1"/>
        <end position="855"/>
    </location>
</feature>
<feature type="transmembrane region" description="Helical" evidence="1">
    <location>
        <begin position="24"/>
        <end position="44"/>
    </location>
</feature>
<feature type="transmembrane region" description="Helical" evidence="1">
    <location>
        <begin position="256"/>
        <end position="276"/>
    </location>
</feature>
<feature type="transmembrane region" description="Helical" evidence="1">
    <location>
        <begin position="318"/>
        <end position="338"/>
    </location>
</feature>
<feature type="transmembrane region" description="Helical" evidence="1">
    <location>
        <begin position="361"/>
        <end position="381"/>
    </location>
</feature>
<feature type="transmembrane region" description="Helical" evidence="1">
    <location>
        <begin position="404"/>
        <end position="424"/>
    </location>
</feature>
<feature type="transmembrane region" description="Helical" evidence="1">
    <location>
        <begin position="430"/>
        <end position="450"/>
    </location>
</feature>
<feature type="transmembrane region" description="Helical" evidence="1">
    <location>
        <begin position="487"/>
        <end position="507"/>
    </location>
</feature>
<feature type="transmembrane region" description="Helical" evidence="1">
    <location>
        <begin position="725"/>
        <end position="745"/>
    </location>
</feature>
<feature type="transmembrane region" description="Helical" evidence="1">
    <location>
        <begin position="780"/>
        <end position="800"/>
    </location>
</feature>
<feature type="transmembrane region" description="Helical" evidence="1">
    <location>
        <begin position="821"/>
        <end position="841"/>
    </location>
</feature>
<gene>
    <name evidence="5" type="ordered locus">Rv0987</name>
</gene>
<keyword id="KW-1003">Cell membrane</keyword>
<keyword id="KW-0472">Membrane</keyword>
<keyword id="KW-1185">Reference proteome</keyword>
<keyword id="KW-0812">Transmembrane</keyword>
<keyword id="KW-1133">Transmembrane helix</keyword>
<keyword id="KW-0813">Transport</keyword>
<organism>
    <name type="scientific">Mycobacterium tuberculosis (strain ATCC 25618 / H37Rv)</name>
    <dbReference type="NCBI Taxonomy" id="83332"/>
    <lineage>
        <taxon>Bacteria</taxon>
        <taxon>Bacillati</taxon>
        <taxon>Actinomycetota</taxon>
        <taxon>Actinomycetes</taxon>
        <taxon>Mycobacteriales</taxon>
        <taxon>Mycobacteriaceae</taxon>
        <taxon>Mycobacterium</taxon>
        <taxon>Mycobacterium tuberculosis complex</taxon>
    </lineage>
</organism>
<sequence length="855" mass="93606">MNDQAPVAYAPLWRTAWRRLRQRPFQYILLVLGIALGVAMIVAIDVSSNSAQRAFDLSAAAITGKSTHRLVSGPAGVDQQLYVDLRRHGYDFSAPVIEGYVLARGLGNRAMQFMGTDPFAESAFRSPLWSNQNIAELGGFLTRPNGVVLSRQVAQKYGLAVGDRIALQVKGAPTTVTLVGLLTPADEVSNQKLSDLIIADISTAQELFHMPGRLSHIDLIIKDEATATRIQQRLPAGVRMETSDTQRDTVKQMTDAFTVNLTALSLIALLVGIFLIYNTVTFNVVQRRPFFAILRCLGVTREQLFWLIMTESLVAGLIGTGLGLLIGIWLGEGLIGLVTQTINDFYFVINVRNVSVSAESLLKGLIIGIFAAMLATLPPAIEAMRTVPASTLRRSSLESKITKLMPWLWVAWFGLGSFGVLMLWLPGNNLVVAFVGLFSVLIALALIAPPLTRFVMLRLAPGLGRLLGPIGRMAPRNIVRSLSRTSIAIAALMMAVSLMVGVSISVGSFRQTLANWLEVTLKSDVYVSPPTLTSGRPSGNLPVDAVRNISKWPGVRDAVMARYSSVFAPDWGREVELMAVSGDISDGKRPYRWIDGNKDTLWPRFLAGKGVMLSEPMVSRQHLQMPPRPITLMTDSGPQTFPVLAVFSDYTSDQGVILMDRASYRAHWQDDDVTTMFLFLASGANSGALIDQLQAAFAGREDIVIQSTHSVREASMFIFDRSFTITIALQLVATVVAFIGVLSALMSLELDRAHELGVFRAIGMTTRQLWKLMFIETGLMGGMAGLMALPTGCILAWILVRIINVRSFGWTLQMHFESAHFLRALLVAVVAALAAGMYPAWRLGRMTIRTAIREE</sequence>
<proteinExistence type="evidence at protein level"/>
<comment type="function">
    <text evidence="2 3">Probably part of an ABC transporter complex involved in host cell binding either through secretion of an adherence factor or through maintaining the architecture and integrity of the mycobacterial cell envelope (PubMed:17030567). Could be required for host endothelial-cell invasion and/or intracellular survival (PubMed:16586367).</text>
</comment>
<comment type="subunit">
    <text evidence="4">The complex is probably composed of two ATP-binding proteins (Rv0986) and two transmembrane proteins (Rv0987).</text>
</comment>
<comment type="subcellular location">
    <subcellularLocation>
        <location evidence="4">Cell membrane</location>
        <topology evidence="1">Multi-pass membrane protein</topology>
    </subcellularLocation>
</comment>
<comment type="induction">
    <text evidence="2">Highly up-regulated during the early stages of invasion of the human blood-brain barrier.</text>
</comment>
<comment type="disruption phenotype">
    <text evidence="2 3">Disruption of the gene reduces the ability of M.tuberculosis to bind to host cells. Disruption does not reduce virulence in a mouse model of infection (PubMed:17030567). Invasion of the infant human brain microvascular endothelial-cell monolayer is significantly decreased in transposon mutant (PubMed:16586367).</text>
</comment>
<comment type="similarity">
    <text evidence="4">Belongs to the ABC-4 integral membrane protein family.</text>
</comment>
<protein>
    <recommendedName>
        <fullName evidence="4">Uncharacterized ABC transporter permease protein Rv0987</fullName>
    </recommendedName>
</protein>